<protein>
    <recommendedName>
        <fullName evidence="1">Uridylate kinase</fullName>
        <shortName evidence="1">UK</shortName>
        <ecNumber evidence="1">2.7.4.22</ecNumber>
    </recommendedName>
    <alternativeName>
        <fullName evidence="1">Uridine monophosphate kinase</fullName>
        <shortName evidence="1">UMP kinase</shortName>
        <shortName evidence="1">UMPK</shortName>
    </alternativeName>
</protein>
<proteinExistence type="inferred from homology"/>
<accession>Q4A587</accession>
<reference key="1">
    <citation type="journal article" date="2005" name="J. Bacteriol.">
        <title>Swine and poultry pathogens: the complete genome sequences of two strains of Mycoplasma hyopneumoniae and a strain of Mycoplasma synoviae.</title>
        <authorList>
            <person name="Vasconcelos A.T.R."/>
            <person name="Ferreira H.B."/>
            <person name="Bizarro C.V."/>
            <person name="Bonatto S.L."/>
            <person name="Carvalho M.O."/>
            <person name="Pinto P.M."/>
            <person name="Almeida D.F."/>
            <person name="Almeida L.G.P."/>
            <person name="Almeida R."/>
            <person name="Alves-Junior L."/>
            <person name="Assuncao E.N."/>
            <person name="Azevedo V.A.C."/>
            <person name="Bogo M.R."/>
            <person name="Brigido M.M."/>
            <person name="Brocchi M."/>
            <person name="Burity H.A."/>
            <person name="Camargo A.A."/>
            <person name="Camargo S.S."/>
            <person name="Carepo M.S."/>
            <person name="Carraro D.M."/>
            <person name="de Mattos Cascardo J.C."/>
            <person name="Castro L.A."/>
            <person name="Cavalcanti G."/>
            <person name="Chemale G."/>
            <person name="Collevatti R.G."/>
            <person name="Cunha C.W."/>
            <person name="Dallagiovanna B."/>
            <person name="Dambros B.P."/>
            <person name="Dellagostin O.A."/>
            <person name="Falcao C."/>
            <person name="Fantinatti-Garboggini F."/>
            <person name="Felipe M.S.S."/>
            <person name="Fiorentin L."/>
            <person name="Franco G.R."/>
            <person name="Freitas N.S.A."/>
            <person name="Frias D."/>
            <person name="Grangeiro T.B."/>
            <person name="Grisard E.C."/>
            <person name="Guimaraes C.T."/>
            <person name="Hungria M."/>
            <person name="Jardim S.N."/>
            <person name="Krieger M.A."/>
            <person name="Laurino J.P."/>
            <person name="Lima L.F.A."/>
            <person name="Lopes M.I."/>
            <person name="Loreto E.L.S."/>
            <person name="Madeira H.M.F."/>
            <person name="Manfio G.P."/>
            <person name="Maranhao A.Q."/>
            <person name="Martinkovics C.T."/>
            <person name="Medeiros S.R.B."/>
            <person name="Moreira M.A.M."/>
            <person name="Neiva M."/>
            <person name="Ramalho-Neto C.E."/>
            <person name="Nicolas M.F."/>
            <person name="Oliveira S.C."/>
            <person name="Paixao R.F.C."/>
            <person name="Pedrosa F.O."/>
            <person name="Pena S.D.J."/>
            <person name="Pereira M."/>
            <person name="Pereira-Ferrari L."/>
            <person name="Piffer I."/>
            <person name="Pinto L.S."/>
            <person name="Potrich D.P."/>
            <person name="Salim A.C.M."/>
            <person name="Santos F.R."/>
            <person name="Schmitt R."/>
            <person name="Schneider M.P.C."/>
            <person name="Schrank A."/>
            <person name="Schrank I.S."/>
            <person name="Schuck A.F."/>
            <person name="Seuanez H.N."/>
            <person name="Silva D.W."/>
            <person name="Silva R."/>
            <person name="Silva S.C."/>
            <person name="Soares C.M.A."/>
            <person name="Souza K.R.L."/>
            <person name="Souza R.C."/>
            <person name="Staats C.C."/>
            <person name="Steffens M.B.R."/>
            <person name="Teixeira S.M.R."/>
            <person name="Urmenyi T.P."/>
            <person name="Vainstein M.H."/>
            <person name="Zuccherato L.W."/>
            <person name="Simpson A.J.G."/>
            <person name="Zaha A."/>
        </authorList>
    </citation>
    <scope>NUCLEOTIDE SEQUENCE [LARGE SCALE GENOMIC DNA]</scope>
    <source>
        <strain>53</strain>
    </source>
</reference>
<feature type="chain" id="PRO_0000323899" description="Uridylate kinase">
    <location>
        <begin position="1"/>
        <end position="239"/>
    </location>
</feature>
<feature type="binding site" evidence="1">
    <location>
        <begin position="10"/>
        <end position="13"/>
    </location>
    <ligand>
        <name>ATP</name>
        <dbReference type="ChEBI" id="CHEBI:30616"/>
    </ligand>
</feature>
<feature type="binding site" evidence="1">
    <location>
        <position position="53"/>
    </location>
    <ligand>
        <name>UMP</name>
        <dbReference type="ChEBI" id="CHEBI:57865"/>
    </ligand>
</feature>
<feature type="binding site" evidence="1">
    <location>
        <position position="54"/>
    </location>
    <ligand>
        <name>ATP</name>
        <dbReference type="ChEBI" id="CHEBI:30616"/>
    </ligand>
</feature>
<feature type="binding site" evidence="1">
    <location>
        <position position="58"/>
    </location>
    <ligand>
        <name>ATP</name>
        <dbReference type="ChEBI" id="CHEBI:30616"/>
    </ligand>
</feature>
<feature type="binding site" evidence="1">
    <location>
        <position position="73"/>
    </location>
    <ligand>
        <name>UMP</name>
        <dbReference type="ChEBI" id="CHEBI:57865"/>
    </ligand>
</feature>
<feature type="binding site" evidence="1">
    <location>
        <begin position="135"/>
        <end position="142"/>
    </location>
    <ligand>
        <name>UMP</name>
        <dbReference type="ChEBI" id="CHEBI:57865"/>
    </ligand>
</feature>
<feature type="binding site" evidence="1">
    <location>
        <position position="163"/>
    </location>
    <ligand>
        <name>ATP</name>
        <dbReference type="ChEBI" id="CHEBI:30616"/>
    </ligand>
</feature>
<feature type="binding site" evidence="1">
    <location>
        <position position="169"/>
    </location>
    <ligand>
        <name>ATP</name>
        <dbReference type="ChEBI" id="CHEBI:30616"/>
    </ligand>
</feature>
<feature type="binding site" evidence="1">
    <location>
        <position position="172"/>
    </location>
    <ligand>
        <name>ATP</name>
        <dbReference type="ChEBI" id="CHEBI:30616"/>
    </ligand>
</feature>
<dbReference type="EC" id="2.7.4.22" evidence="1"/>
<dbReference type="EMBL" id="AE017245">
    <property type="protein sequence ID" value="AAZ44084.1"/>
    <property type="molecule type" value="Genomic_DNA"/>
</dbReference>
<dbReference type="RefSeq" id="WP_011283813.1">
    <property type="nucleotide sequence ID" value="NC_007294.1"/>
</dbReference>
<dbReference type="SMR" id="Q4A587"/>
<dbReference type="STRING" id="262723.MS53_0677"/>
<dbReference type="GeneID" id="93530469"/>
<dbReference type="KEGG" id="msy:MS53_0677"/>
<dbReference type="eggNOG" id="COG0528">
    <property type="taxonomic scope" value="Bacteria"/>
</dbReference>
<dbReference type="HOGENOM" id="CLU_033861_0_1_14"/>
<dbReference type="OrthoDB" id="9807458at2"/>
<dbReference type="UniPathway" id="UPA00159">
    <property type="reaction ID" value="UER00275"/>
</dbReference>
<dbReference type="Proteomes" id="UP000000549">
    <property type="component" value="Chromosome"/>
</dbReference>
<dbReference type="GO" id="GO:0005737">
    <property type="term" value="C:cytoplasm"/>
    <property type="evidence" value="ECO:0007669"/>
    <property type="project" value="UniProtKB-SubCell"/>
</dbReference>
<dbReference type="GO" id="GO:0005524">
    <property type="term" value="F:ATP binding"/>
    <property type="evidence" value="ECO:0007669"/>
    <property type="project" value="UniProtKB-KW"/>
</dbReference>
<dbReference type="GO" id="GO:0033862">
    <property type="term" value="F:UMP kinase activity"/>
    <property type="evidence" value="ECO:0007669"/>
    <property type="project" value="UniProtKB-EC"/>
</dbReference>
<dbReference type="GO" id="GO:0044210">
    <property type="term" value="P:'de novo' CTP biosynthetic process"/>
    <property type="evidence" value="ECO:0007669"/>
    <property type="project" value="UniProtKB-UniRule"/>
</dbReference>
<dbReference type="GO" id="GO:0006225">
    <property type="term" value="P:UDP biosynthetic process"/>
    <property type="evidence" value="ECO:0007669"/>
    <property type="project" value="TreeGrafter"/>
</dbReference>
<dbReference type="CDD" id="cd04254">
    <property type="entry name" value="AAK_UMPK-PyrH-Ec"/>
    <property type="match status" value="1"/>
</dbReference>
<dbReference type="FunFam" id="3.40.1160.10:FF:000001">
    <property type="entry name" value="Uridylate kinase"/>
    <property type="match status" value="1"/>
</dbReference>
<dbReference type="Gene3D" id="3.40.1160.10">
    <property type="entry name" value="Acetylglutamate kinase-like"/>
    <property type="match status" value="1"/>
</dbReference>
<dbReference type="HAMAP" id="MF_01220_B">
    <property type="entry name" value="PyrH_B"/>
    <property type="match status" value="1"/>
</dbReference>
<dbReference type="InterPro" id="IPR036393">
    <property type="entry name" value="AceGlu_kinase-like_sf"/>
</dbReference>
<dbReference type="InterPro" id="IPR001048">
    <property type="entry name" value="Asp/Glu/Uridylate_kinase"/>
</dbReference>
<dbReference type="InterPro" id="IPR011817">
    <property type="entry name" value="Uridylate_kinase"/>
</dbReference>
<dbReference type="InterPro" id="IPR015963">
    <property type="entry name" value="Uridylate_kinase_bac"/>
</dbReference>
<dbReference type="NCBIfam" id="TIGR02075">
    <property type="entry name" value="pyrH_bact"/>
    <property type="match status" value="1"/>
</dbReference>
<dbReference type="PANTHER" id="PTHR42833">
    <property type="entry name" value="URIDYLATE KINASE"/>
    <property type="match status" value="1"/>
</dbReference>
<dbReference type="PANTHER" id="PTHR42833:SF4">
    <property type="entry name" value="URIDYLATE KINASE PUMPKIN, CHLOROPLASTIC"/>
    <property type="match status" value="1"/>
</dbReference>
<dbReference type="Pfam" id="PF00696">
    <property type="entry name" value="AA_kinase"/>
    <property type="match status" value="1"/>
</dbReference>
<dbReference type="PIRSF" id="PIRSF005650">
    <property type="entry name" value="Uridylate_kin"/>
    <property type="match status" value="1"/>
</dbReference>
<dbReference type="SUPFAM" id="SSF53633">
    <property type="entry name" value="Carbamate kinase-like"/>
    <property type="match status" value="1"/>
</dbReference>
<evidence type="ECO:0000255" key="1">
    <source>
        <dbReference type="HAMAP-Rule" id="MF_01220"/>
    </source>
</evidence>
<gene>
    <name evidence="1" type="primary">pyrH</name>
    <name type="ordered locus">MS53_0677</name>
</gene>
<name>PYRH_MYCS5</name>
<sequence length="239" mass="26416">MIKYKRILIKLSGEGFANKEKNLAIDFELVAKIASQLKIIIEKGVQVSIVVGGGNFWRGVSAEKNGIPRNRADFIGMLATEMNALALQSGFEKAGLKARVQSSINIDQKVAENYINEKTLKYLNNGEVVIFAGGTGRPYFTTDTAATLFAAEIKAEVILMGKNKVDGVYDSDPKKNENAKHFSKITYDQILEKKLQVMDLTATSMARDNNINLIVFNLLEDNSIIKALEGKITHTEVTR</sequence>
<organism>
    <name type="scientific">Mycoplasmopsis synoviae (strain 53)</name>
    <name type="common">Mycoplasma synoviae</name>
    <dbReference type="NCBI Taxonomy" id="262723"/>
    <lineage>
        <taxon>Bacteria</taxon>
        <taxon>Bacillati</taxon>
        <taxon>Mycoplasmatota</taxon>
        <taxon>Mycoplasmoidales</taxon>
        <taxon>Metamycoplasmataceae</taxon>
        <taxon>Mycoplasmopsis</taxon>
    </lineage>
</organism>
<comment type="function">
    <text evidence="1">Catalyzes the reversible phosphorylation of UMP to UDP.</text>
</comment>
<comment type="catalytic activity">
    <reaction evidence="1">
        <text>UMP + ATP = UDP + ADP</text>
        <dbReference type="Rhea" id="RHEA:24400"/>
        <dbReference type="ChEBI" id="CHEBI:30616"/>
        <dbReference type="ChEBI" id="CHEBI:57865"/>
        <dbReference type="ChEBI" id="CHEBI:58223"/>
        <dbReference type="ChEBI" id="CHEBI:456216"/>
        <dbReference type="EC" id="2.7.4.22"/>
    </reaction>
</comment>
<comment type="activity regulation">
    <text evidence="1">Inhibited by UTP.</text>
</comment>
<comment type="pathway">
    <text evidence="1">Pyrimidine metabolism; CTP biosynthesis via de novo pathway; UDP from UMP (UMPK route): step 1/1.</text>
</comment>
<comment type="subunit">
    <text evidence="1">Homohexamer.</text>
</comment>
<comment type="subcellular location">
    <subcellularLocation>
        <location evidence="1">Cytoplasm</location>
    </subcellularLocation>
</comment>
<comment type="similarity">
    <text evidence="1">Belongs to the UMP kinase family.</text>
</comment>
<keyword id="KW-0067">ATP-binding</keyword>
<keyword id="KW-0963">Cytoplasm</keyword>
<keyword id="KW-0418">Kinase</keyword>
<keyword id="KW-0547">Nucleotide-binding</keyword>
<keyword id="KW-0665">Pyrimidine biosynthesis</keyword>
<keyword id="KW-1185">Reference proteome</keyword>
<keyword id="KW-0808">Transferase</keyword>